<dbReference type="EMBL" id="AJ566187">
    <property type="protein sequence ID" value="CAD92804.1"/>
    <property type="molecule type" value="Genomic_DNA"/>
</dbReference>
<proteinExistence type="evidence at transcript level"/>
<accession>Q7Z9L4</accession>
<keyword id="KW-0134">Cell wall</keyword>
<keyword id="KW-0183">Conidiation</keyword>
<keyword id="KW-1015">Disulfide bond</keyword>
<keyword id="KW-0325">Glycoprotein</keyword>
<keyword id="KW-0964">Secreted</keyword>
<keyword id="KW-0732">Signal</keyword>
<keyword id="KW-0749">Sporulation</keyword>
<protein>
    <recommendedName>
        <fullName evidence="7">Class I hydrophobin 4</fullName>
    </recommendedName>
</protein>
<gene>
    <name evidence="7" type="primary">hcf-4</name>
</gene>
<reference key="1">
    <citation type="journal article" date="1999" name="Mol. Gen. Genet.">
        <title>Isolation and characterisation of five different hydrophobin-encoding cDNAs from the fungal tomato pathogen Cladosporium fulvum.</title>
        <authorList>
            <person name="Segers G.C."/>
            <person name="Hamada W."/>
            <person name="Oliver R.P."/>
            <person name="Spanu P.D."/>
        </authorList>
    </citation>
    <scope>NUCLEOTIDE SEQUENCE [GENOMIC DNA]</scope>
    <scope>INDUCTION</scope>
</reference>
<reference key="2">
    <citation type="journal article" date="2001" name="Fungal Genet. Biol.">
        <title>The hydrophobin HCf-1 of Cladosporium fulvum is required for efficient water-mediated dispersal of conidia.</title>
        <authorList>
            <person name="Whiteford J.R."/>
            <person name="Spanu P.D."/>
        </authorList>
    </citation>
    <scope>NUCLEOTIDE SEQUENCE [GENOMIC DNA]</scope>
    <scope>FUNCTION</scope>
    <scope>DISRUPTION PHENOTYPE</scope>
</reference>
<reference key="3">
    <citation type="journal article" date="2008" name="FEMS Microbiol. Lett.">
        <title>Localization of Cladosporium fulvum hydrophobins reveals a role for HCf-6 in adhesion.</title>
        <authorList>
            <person name="Lacroix H."/>
            <person name="Whiteford J.R."/>
            <person name="Spanu P.D."/>
        </authorList>
    </citation>
    <scope>TISSUE SPECIFICITY</scope>
</reference>
<organism>
    <name type="scientific">Passalora fulva</name>
    <name type="common">Tomato leaf mold</name>
    <name type="synonym">Cladosporium fulvum</name>
    <dbReference type="NCBI Taxonomy" id="5499"/>
    <lineage>
        <taxon>Eukaryota</taxon>
        <taxon>Fungi</taxon>
        <taxon>Dikarya</taxon>
        <taxon>Ascomycota</taxon>
        <taxon>Pezizomycotina</taxon>
        <taxon>Dothideomycetes</taxon>
        <taxon>Dothideomycetidae</taxon>
        <taxon>Mycosphaerellales</taxon>
        <taxon>Mycosphaerellaceae</taxon>
        <taxon>Fulvia</taxon>
    </lineage>
</organism>
<evidence type="ECO:0000250" key="1">
    <source>
        <dbReference type="UniProtKB" id="Q04571"/>
    </source>
</evidence>
<evidence type="ECO:0000255" key="2"/>
<evidence type="ECO:0000255" key="3">
    <source>
        <dbReference type="PROSITE-ProRule" id="PRU00498"/>
    </source>
</evidence>
<evidence type="ECO:0000269" key="4">
    <source>
    </source>
</evidence>
<evidence type="ECO:0000269" key="5">
    <source>
    </source>
</evidence>
<evidence type="ECO:0000269" key="6">
    <source>
    </source>
</evidence>
<evidence type="ECO:0000303" key="7">
    <source>
    </source>
</evidence>
<evidence type="ECO:0000305" key="8"/>
<evidence type="ECO:0000305" key="9">
    <source>
    </source>
</evidence>
<sequence length="227" mass="24148">MQFTTFALLAVAAATASAQAPQAYYGQGAKSAQVHTFETRKAVPTRVAEVYGEHEQERVTKTKVYHALVTEEAQHHGEEHKAAPYKAYKVYSVASSYSAQPRATHAAEHYGEGKKADHYAEPAKAVHADPHHVDPVKARPTMAATEMKQPEKEAPSTVCAKGSEISCCTTDSSNSGALGNVLGGSCLLQNLSLLSLNSNCAAANTFCCPTTQEGTLNINLSCIPISL</sequence>
<name>HCF4_PASFU</name>
<feature type="signal peptide" evidence="2">
    <location>
        <begin position="1"/>
        <end position="18"/>
    </location>
</feature>
<feature type="chain" id="PRO_5004296973" description="Class I hydrophobin 4">
    <location>
        <begin position="19"/>
        <end position="227"/>
    </location>
</feature>
<feature type="glycosylation site" description="N-linked (GlcNAc...) asparagine" evidence="3">
    <location>
        <position position="190"/>
    </location>
</feature>
<feature type="glycosylation site" description="N-linked (GlcNAc...) asparagine" evidence="3">
    <location>
        <position position="219"/>
    </location>
</feature>
<feature type="disulfide bond" evidence="1">
    <location>
        <begin position="159"/>
        <end position="207"/>
    </location>
</feature>
<feature type="disulfide bond" evidence="1">
    <location>
        <begin position="167"/>
        <end position="200"/>
    </location>
</feature>
<feature type="disulfide bond" evidence="1">
    <location>
        <begin position="168"/>
        <end position="186"/>
    </location>
</feature>
<feature type="disulfide bond" evidence="1">
    <location>
        <begin position="208"/>
        <end position="222"/>
    </location>
</feature>
<comment type="function">
    <text evidence="5 8">Aerial growth, conidiation, and dispersal of filamentous fungi in the environment rely upon a capability of their secreting small amphipathic proteins called hydrophobins (HPBs) with low sequence identity. Class I can self-assemble into an outermost layer of rodlet bundles on aerial cell surfaces, conferring cellular hydrophobicity that supports fungal growth, development and dispersal; whereas Class II form highly ordered films at water-air interfaces through intermolecular interactions but contribute nothing to the rodlet structure (Probable). Hcf-4 is a class I hydrophobin that is involved in the development and germination of conidia (PubMed:11343402).</text>
</comment>
<comment type="subunit">
    <text evidence="1">Self-assembles to form functional amyloid fibrils called rodlets. Self-assembly into fibrillar rodlets occurs spontaneously at hydrophobic:hydrophilic interfaces and the rodlets further associate laterally to form amphipathic monolayers.</text>
</comment>
<comment type="subcellular location">
    <subcellularLocation>
        <location evidence="9">Secreted</location>
    </subcellularLocation>
    <subcellularLocation>
        <location evidence="9">Secreted</location>
        <location evidence="9">Cell wall</location>
    </subcellularLocation>
</comment>
<comment type="tissue specificity">
    <text evidence="6">Expressed in conidia and aerial hyphae.</text>
</comment>
<comment type="induction">
    <text evidence="4">Expression is increased during sporulation (PubMed:10394901). Expression up-regulated by carbon or nitrogen starvation (PubMed:10394901).</text>
</comment>
<comment type="disruption phenotype">
    <text evidence="5">When the four class I hydrophobins (hcf-1 to -4) are partially silenced, approximately 10 times fewer conidia are produced an the germination efficiency of conidia is reduced by about 50%.</text>
</comment>
<comment type="similarity">
    <text evidence="8">Belongs to the fungal hydrophobin family.</text>
</comment>